<dbReference type="EMBL" id="AK018599">
    <property type="protein sequence ID" value="BAB31301.1"/>
    <property type="molecule type" value="mRNA"/>
</dbReference>
<dbReference type="EMBL" id="BC089511">
    <property type="protein sequence ID" value="AAH89511.1"/>
    <property type="molecule type" value="mRNA"/>
</dbReference>
<dbReference type="EMBL" id="X74297">
    <property type="protein sequence ID" value="CAA52350.1"/>
    <property type="molecule type" value="Genomic_DNA"/>
</dbReference>
<dbReference type="PIR" id="A60037">
    <property type="entry name" value="A60037"/>
</dbReference>
<dbReference type="RefSeq" id="NP_001300898.1">
    <property type="nucleotide sequence ID" value="NM_001313969.1"/>
</dbReference>
<dbReference type="RefSeq" id="NP_001394459.1">
    <property type="nucleotide sequence ID" value="NM_001407530.1"/>
</dbReference>
<dbReference type="RefSeq" id="NP_035832.1">
    <property type="nucleotide sequence ID" value="NM_011702.3"/>
</dbReference>
<dbReference type="RefSeq" id="XP_006512510.1">
    <property type="nucleotide sequence ID" value="XM_006512447.1"/>
</dbReference>
<dbReference type="BMRB" id="P32648"/>
<dbReference type="SMR" id="P32648"/>
<dbReference type="BioGRID" id="204525">
    <property type="interactions" value="1"/>
</dbReference>
<dbReference type="FunCoup" id="P32648">
    <property type="interactions" value="575"/>
</dbReference>
<dbReference type="STRING" id="10090.ENSMUSP00000019906"/>
<dbReference type="GlyCosmos" id="P32648">
    <property type="glycosylation" value="1 site, No reported glycans"/>
</dbReference>
<dbReference type="GlyGen" id="P32648">
    <property type="glycosylation" value="1 site"/>
</dbReference>
<dbReference type="PhosphoSitePlus" id="P32648"/>
<dbReference type="PaxDb" id="10090-ENSMUSP00000019906"/>
<dbReference type="ProteomicsDB" id="297885"/>
<dbReference type="Pumba" id="P32648"/>
<dbReference type="DNASU" id="22353"/>
<dbReference type="GeneID" id="22353"/>
<dbReference type="KEGG" id="mmu:22353"/>
<dbReference type="UCSC" id="uc007egk.1">
    <property type="organism name" value="mouse"/>
</dbReference>
<dbReference type="AGR" id="MGI:98933"/>
<dbReference type="CTD" id="7432"/>
<dbReference type="MGI" id="MGI:98933">
    <property type="gene designation" value="Vip"/>
</dbReference>
<dbReference type="eggNOG" id="ENOG502QVTA">
    <property type="taxonomic scope" value="Eukaryota"/>
</dbReference>
<dbReference type="InParanoid" id="P32648"/>
<dbReference type="OrthoDB" id="8795594at2759"/>
<dbReference type="PhylomeDB" id="P32648"/>
<dbReference type="TreeFam" id="TF332804"/>
<dbReference type="Reactome" id="R-MMU-418555">
    <property type="pathway name" value="G alpha (s) signalling events"/>
</dbReference>
<dbReference type="Reactome" id="R-MMU-420092">
    <property type="pathway name" value="Glucagon-type ligand receptors"/>
</dbReference>
<dbReference type="BioGRID-ORCS" id="22353">
    <property type="hits" value="2 hits in 76 CRISPR screens"/>
</dbReference>
<dbReference type="PRO" id="PR:P32648"/>
<dbReference type="Proteomes" id="UP000000589">
    <property type="component" value="Unplaced"/>
</dbReference>
<dbReference type="RNAct" id="P32648">
    <property type="molecule type" value="protein"/>
</dbReference>
<dbReference type="GO" id="GO:0005576">
    <property type="term" value="C:extracellular region"/>
    <property type="evidence" value="ECO:0007669"/>
    <property type="project" value="UniProtKB-SubCell"/>
</dbReference>
<dbReference type="GO" id="GO:0005179">
    <property type="term" value="F:hormone activity"/>
    <property type="evidence" value="ECO:0000314"/>
    <property type="project" value="BHF-UCL"/>
</dbReference>
<dbReference type="GO" id="GO:0005184">
    <property type="term" value="F:neuropeptide hormone activity"/>
    <property type="evidence" value="ECO:0000250"/>
    <property type="project" value="UniProtKB"/>
</dbReference>
<dbReference type="GO" id="GO:0031891">
    <property type="term" value="F:type 1 vasoactive intestinal polypeptide receptor binding"/>
    <property type="evidence" value="ECO:0000250"/>
    <property type="project" value="UniProtKB"/>
</dbReference>
<dbReference type="GO" id="GO:0007189">
    <property type="term" value="P:adenylate cyclase-activating G protein-coupled receptor signaling pathway"/>
    <property type="evidence" value="ECO:0000314"/>
    <property type="project" value="BHF-UCL"/>
</dbReference>
<dbReference type="GO" id="GO:0048255">
    <property type="term" value="P:mRNA stabilization"/>
    <property type="evidence" value="ECO:0000250"/>
    <property type="project" value="AgBase"/>
</dbReference>
<dbReference type="GO" id="GO:0045732">
    <property type="term" value="P:positive regulation of protein catabolic process"/>
    <property type="evidence" value="ECO:0000314"/>
    <property type="project" value="BHF-UCL"/>
</dbReference>
<dbReference type="GO" id="GO:0070459">
    <property type="term" value="P:prolactin secretion"/>
    <property type="evidence" value="ECO:0000250"/>
    <property type="project" value="AgBase"/>
</dbReference>
<dbReference type="GO" id="GO:0032880">
    <property type="term" value="P:regulation of protein localization"/>
    <property type="evidence" value="ECO:0000314"/>
    <property type="project" value="BHF-UCL"/>
</dbReference>
<dbReference type="GO" id="GO:0009966">
    <property type="term" value="P:regulation of signal transduction"/>
    <property type="evidence" value="ECO:0000315"/>
    <property type="project" value="MGI"/>
</dbReference>
<dbReference type="Gene3D" id="6.10.250.590">
    <property type="match status" value="2"/>
</dbReference>
<dbReference type="InterPro" id="IPR000532">
    <property type="entry name" value="Glucagon_GIP_secretin_VIP"/>
</dbReference>
<dbReference type="InterPro" id="IPR046963">
    <property type="entry name" value="VIP/GHRH-like"/>
</dbReference>
<dbReference type="PANTHER" id="PTHR11213">
    <property type="entry name" value="GLUCAGON-FAMILY NEUROPEPTIDE"/>
    <property type="match status" value="1"/>
</dbReference>
<dbReference type="PANTHER" id="PTHR11213:SF5">
    <property type="entry name" value="VIP PEPTIDES"/>
    <property type="match status" value="1"/>
</dbReference>
<dbReference type="Pfam" id="PF00123">
    <property type="entry name" value="Hormone_2"/>
    <property type="match status" value="2"/>
</dbReference>
<dbReference type="SMART" id="SM00070">
    <property type="entry name" value="GLUCA"/>
    <property type="match status" value="2"/>
</dbReference>
<dbReference type="PROSITE" id="PS00260">
    <property type="entry name" value="GLUCAGON"/>
    <property type="match status" value="2"/>
</dbReference>
<organism>
    <name type="scientific">Mus musculus</name>
    <name type="common">Mouse</name>
    <dbReference type="NCBI Taxonomy" id="10090"/>
    <lineage>
        <taxon>Eukaryota</taxon>
        <taxon>Metazoa</taxon>
        <taxon>Chordata</taxon>
        <taxon>Craniata</taxon>
        <taxon>Vertebrata</taxon>
        <taxon>Euteleostomi</taxon>
        <taxon>Mammalia</taxon>
        <taxon>Eutheria</taxon>
        <taxon>Euarchontoglires</taxon>
        <taxon>Glires</taxon>
        <taxon>Rodentia</taxon>
        <taxon>Myomorpha</taxon>
        <taxon>Muroidea</taxon>
        <taxon>Muridae</taxon>
        <taxon>Murinae</taxon>
        <taxon>Mus</taxon>
        <taxon>Mus</taxon>
    </lineage>
</organism>
<comment type="function">
    <molecule>Vasoactive intestinal peptide</molecule>
    <text evidence="2">VIP is a neuropeptide involved in a diverse array of physiological processes through activating the PACAP subfamily of class B1 G protein-coupled receptors: VIP receptor 1 (VPR1) and VIP receptor 2 (VPR2). Abundantly expressed throughout the CNS and peripheral nervous systems where they primarily exert neuroprotective and immune modulatory roles (By similarity). Also causes vasodilation, lowers arterial blood pressure, stimulates myocardial contractility, increases glycogenolysis and relaxes the smooth muscle of trachea, stomach and gall bladder (By similarity).</text>
</comment>
<comment type="function">
    <text evidence="2">PHM-27 and PHV-42 are two bioactive forms from proteolysis of the same precursor protein, that cause vasodilation. PHM-27 is a potent agonist of the calcitonin receptor CALCR, with similar efficacy as calcitonin.</text>
</comment>
<comment type="subcellular location">
    <subcellularLocation>
        <location>Secreted</location>
    </subcellularLocation>
</comment>
<comment type="similarity">
    <text evidence="6">Belongs to the glucagon family.</text>
</comment>
<keyword id="KW-0027">Amidation</keyword>
<keyword id="KW-0165">Cleavage on pair of basic residues</keyword>
<keyword id="KW-0903">Direct protein sequencing</keyword>
<keyword id="KW-0325">Glycoprotein</keyword>
<keyword id="KW-0372">Hormone</keyword>
<keyword id="KW-0597">Phosphoprotein</keyword>
<keyword id="KW-1185">Reference proteome</keyword>
<keyword id="KW-0964">Secreted</keyword>
<keyword id="KW-0732">Signal</keyword>
<gene>
    <name type="primary">Vip</name>
</gene>
<feature type="signal peptide" evidence="1">
    <location>
        <begin position="1"/>
        <end position="21"/>
    </location>
</feature>
<feature type="propeptide" id="PRO_0000011462">
    <location>
        <begin position="22"/>
        <end position="79"/>
    </location>
</feature>
<feature type="peptide" id="PRO_0000011463" description="Intestinal peptide PHI-42" evidence="1">
    <location>
        <begin position="81"/>
        <end position="122"/>
    </location>
</feature>
<feature type="peptide" id="PRO_0000011464" description="Intestinal peptide PHI-27">
    <location>
        <begin position="81"/>
        <end position="107"/>
    </location>
</feature>
<feature type="peptide" id="PRO_0000011465" description="Vasoactive intestinal peptide">
    <location>
        <begin position="125"/>
        <end position="152"/>
    </location>
</feature>
<feature type="propeptide" id="PRO_0000011466">
    <location>
        <begin position="156"/>
        <end position="170"/>
    </location>
</feature>
<feature type="modified residue" description="Phosphoserine" evidence="3">
    <location>
        <position position="76"/>
    </location>
</feature>
<feature type="modified residue" description="Isoleucine amide" evidence="1">
    <location>
        <position position="107"/>
    </location>
</feature>
<feature type="modified residue" description="Asparagine amide" evidence="5">
    <location>
        <position position="152"/>
    </location>
</feature>
<feature type="glycosylation site" description="N-linked (GlcNAc...) asparagine" evidence="4">
    <location>
        <position position="133"/>
    </location>
</feature>
<feature type="sequence conflict" description="In Ref. 2 and 3." evidence="6" ref="2 3">
    <original>V</original>
    <variation>VS</variation>
    <location>
        <position position="35"/>
    </location>
</feature>
<feature type="sequence conflict" description="In Ref. 5; AA sequence." evidence="6" ref="5">
    <original>I</original>
    <variation>V</variation>
    <location>
        <position position="122"/>
    </location>
</feature>
<protein>
    <recommendedName>
        <fullName>VIP peptides</fullName>
    </recommendedName>
    <component>
        <recommendedName>
            <fullName>Intestinal peptide PHI-42</fullName>
        </recommendedName>
    </component>
    <component>
        <recommendedName>
            <fullName>Intestinal peptide PHI-27</fullName>
        </recommendedName>
        <alternativeName>
            <fullName>Peptide histidine isoleucinamide 27</fullName>
        </alternativeName>
    </component>
    <component>
        <recommendedName>
            <fullName>Vasoactive intestinal peptide</fullName>
            <shortName>VIP</shortName>
        </recommendedName>
        <alternativeName>
            <fullName>Vasoactive intestinal polypeptide</fullName>
        </alternativeName>
    </component>
</protein>
<evidence type="ECO:0000250" key="1"/>
<evidence type="ECO:0000250" key="2">
    <source>
        <dbReference type="UniProtKB" id="P01282"/>
    </source>
</evidence>
<evidence type="ECO:0000250" key="3">
    <source>
        <dbReference type="UniProtKB" id="P01283"/>
    </source>
</evidence>
<evidence type="ECO:0000255" key="4"/>
<evidence type="ECO:0000269" key="5">
    <source>
    </source>
</evidence>
<evidence type="ECO:0000305" key="6"/>
<reference key="1">
    <citation type="journal article" date="1991" name="Brain Res. Mol. Brain Res.">
        <title>Characterization of the gene and messages for vasoactive intestinal polypeptide (VIP) in rat and mouse.</title>
        <authorList>
            <person name="Lamperti E.D."/>
            <person name="Rosen K.M."/>
            <person name="Villa-Komaroff L."/>
        </authorList>
    </citation>
    <scope>NUCLEOTIDE SEQUENCE [GENOMIC DNA]</scope>
</reference>
<reference key="2">
    <citation type="journal article" date="2005" name="Science">
        <title>The transcriptional landscape of the mammalian genome.</title>
        <authorList>
            <person name="Carninci P."/>
            <person name="Kasukawa T."/>
            <person name="Katayama S."/>
            <person name="Gough J."/>
            <person name="Frith M.C."/>
            <person name="Maeda N."/>
            <person name="Oyama R."/>
            <person name="Ravasi T."/>
            <person name="Lenhard B."/>
            <person name="Wells C."/>
            <person name="Kodzius R."/>
            <person name="Shimokawa K."/>
            <person name="Bajic V.B."/>
            <person name="Brenner S.E."/>
            <person name="Batalov S."/>
            <person name="Forrest A.R."/>
            <person name="Zavolan M."/>
            <person name="Davis M.J."/>
            <person name="Wilming L.G."/>
            <person name="Aidinis V."/>
            <person name="Allen J.E."/>
            <person name="Ambesi-Impiombato A."/>
            <person name="Apweiler R."/>
            <person name="Aturaliya R.N."/>
            <person name="Bailey T.L."/>
            <person name="Bansal M."/>
            <person name="Baxter L."/>
            <person name="Beisel K.W."/>
            <person name="Bersano T."/>
            <person name="Bono H."/>
            <person name="Chalk A.M."/>
            <person name="Chiu K.P."/>
            <person name="Choudhary V."/>
            <person name="Christoffels A."/>
            <person name="Clutterbuck D.R."/>
            <person name="Crowe M.L."/>
            <person name="Dalla E."/>
            <person name="Dalrymple B.P."/>
            <person name="de Bono B."/>
            <person name="Della Gatta G."/>
            <person name="di Bernardo D."/>
            <person name="Down T."/>
            <person name="Engstrom P."/>
            <person name="Fagiolini M."/>
            <person name="Faulkner G."/>
            <person name="Fletcher C.F."/>
            <person name="Fukushima T."/>
            <person name="Furuno M."/>
            <person name="Futaki S."/>
            <person name="Gariboldi M."/>
            <person name="Georgii-Hemming P."/>
            <person name="Gingeras T.R."/>
            <person name="Gojobori T."/>
            <person name="Green R.E."/>
            <person name="Gustincich S."/>
            <person name="Harbers M."/>
            <person name="Hayashi Y."/>
            <person name="Hensch T.K."/>
            <person name="Hirokawa N."/>
            <person name="Hill D."/>
            <person name="Huminiecki L."/>
            <person name="Iacono M."/>
            <person name="Ikeo K."/>
            <person name="Iwama A."/>
            <person name="Ishikawa T."/>
            <person name="Jakt M."/>
            <person name="Kanapin A."/>
            <person name="Katoh M."/>
            <person name="Kawasawa Y."/>
            <person name="Kelso J."/>
            <person name="Kitamura H."/>
            <person name="Kitano H."/>
            <person name="Kollias G."/>
            <person name="Krishnan S.P."/>
            <person name="Kruger A."/>
            <person name="Kummerfeld S.K."/>
            <person name="Kurochkin I.V."/>
            <person name="Lareau L.F."/>
            <person name="Lazarevic D."/>
            <person name="Lipovich L."/>
            <person name="Liu J."/>
            <person name="Liuni S."/>
            <person name="McWilliam S."/>
            <person name="Madan Babu M."/>
            <person name="Madera M."/>
            <person name="Marchionni L."/>
            <person name="Matsuda H."/>
            <person name="Matsuzawa S."/>
            <person name="Miki H."/>
            <person name="Mignone F."/>
            <person name="Miyake S."/>
            <person name="Morris K."/>
            <person name="Mottagui-Tabar S."/>
            <person name="Mulder N."/>
            <person name="Nakano N."/>
            <person name="Nakauchi H."/>
            <person name="Ng P."/>
            <person name="Nilsson R."/>
            <person name="Nishiguchi S."/>
            <person name="Nishikawa S."/>
            <person name="Nori F."/>
            <person name="Ohara O."/>
            <person name="Okazaki Y."/>
            <person name="Orlando V."/>
            <person name="Pang K.C."/>
            <person name="Pavan W.J."/>
            <person name="Pavesi G."/>
            <person name="Pesole G."/>
            <person name="Petrovsky N."/>
            <person name="Piazza S."/>
            <person name="Reed J."/>
            <person name="Reid J.F."/>
            <person name="Ring B.Z."/>
            <person name="Ringwald M."/>
            <person name="Rost B."/>
            <person name="Ruan Y."/>
            <person name="Salzberg S.L."/>
            <person name="Sandelin A."/>
            <person name="Schneider C."/>
            <person name="Schoenbach C."/>
            <person name="Sekiguchi K."/>
            <person name="Semple C.A."/>
            <person name="Seno S."/>
            <person name="Sessa L."/>
            <person name="Sheng Y."/>
            <person name="Shibata Y."/>
            <person name="Shimada H."/>
            <person name="Shimada K."/>
            <person name="Silva D."/>
            <person name="Sinclair B."/>
            <person name="Sperling S."/>
            <person name="Stupka E."/>
            <person name="Sugiura K."/>
            <person name="Sultana R."/>
            <person name="Takenaka Y."/>
            <person name="Taki K."/>
            <person name="Tammoja K."/>
            <person name="Tan S.L."/>
            <person name="Tang S."/>
            <person name="Taylor M.S."/>
            <person name="Tegner J."/>
            <person name="Teichmann S.A."/>
            <person name="Ueda H.R."/>
            <person name="van Nimwegen E."/>
            <person name="Verardo R."/>
            <person name="Wei C.L."/>
            <person name="Yagi K."/>
            <person name="Yamanishi H."/>
            <person name="Zabarovsky E."/>
            <person name="Zhu S."/>
            <person name="Zimmer A."/>
            <person name="Hide W."/>
            <person name="Bult C."/>
            <person name="Grimmond S.M."/>
            <person name="Teasdale R.D."/>
            <person name="Liu E.T."/>
            <person name="Brusic V."/>
            <person name="Quackenbush J."/>
            <person name="Wahlestedt C."/>
            <person name="Mattick J.S."/>
            <person name="Hume D.A."/>
            <person name="Kai C."/>
            <person name="Sasaki D."/>
            <person name="Tomaru Y."/>
            <person name="Fukuda S."/>
            <person name="Kanamori-Katayama M."/>
            <person name="Suzuki M."/>
            <person name="Aoki J."/>
            <person name="Arakawa T."/>
            <person name="Iida J."/>
            <person name="Imamura K."/>
            <person name="Itoh M."/>
            <person name="Kato T."/>
            <person name="Kawaji H."/>
            <person name="Kawagashira N."/>
            <person name="Kawashima T."/>
            <person name="Kojima M."/>
            <person name="Kondo S."/>
            <person name="Konno H."/>
            <person name="Nakano K."/>
            <person name="Ninomiya N."/>
            <person name="Nishio T."/>
            <person name="Okada M."/>
            <person name="Plessy C."/>
            <person name="Shibata K."/>
            <person name="Shiraki T."/>
            <person name="Suzuki S."/>
            <person name="Tagami M."/>
            <person name="Waki K."/>
            <person name="Watahiki A."/>
            <person name="Okamura-Oho Y."/>
            <person name="Suzuki H."/>
            <person name="Kawai J."/>
            <person name="Hayashizaki Y."/>
        </authorList>
    </citation>
    <scope>NUCLEOTIDE SEQUENCE [LARGE SCALE MRNA]</scope>
    <source>
        <strain>C57BL/6J</strain>
        <tissue>Cecum</tissue>
    </source>
</reference>
<reference key="3">
    <citation type="journal article" date="2004" name="Genome Res.">
        <title>The status, quality, and expansion of the NIH full-length cDNA project: the Mammalian Gene Collection (MGC).</title>
        <authorList>
            <consortium name="The MGC Project Team"/>
        </authorList>
    </citation>
    <scope>NUCLEOTIDE SEQUENCE [LARGE SCALE MRNA]</scope>
    <source>
        <tissue>Pituitary</tissue>
    </source>
</reference>
<reference key="4">
    <citation type="journal article" date="1994" name="DNA Seq.">
        <title>High conservation of upstream regulatory sequences on the human and mouse vasoactive intestinal peptide (VIP) genes.</title>
        <authorList>
            <person name="Sena M."/>
            <person name="Bravo D.T."/>
            <person name="Agoston D."/>
            <person name="Waschek J.A."/>
        </authorList>
    </citation>
    <scope>NUCLEOTIDE SEQUENCE [GENOMIC DNA] OF 1-36</scope>
    <source>
        <strain>C57BL/6J</strain>
        <tissue>Spleen</tissue>
    </source>
</reference>
<reference key="5">
    <citation type="journal article" date="1993" name="Cell. Immunol.">
        <title>Variants of vasoactive intestinal peptide in mouse mast cells and rat basophilic leukemia cells.</title>
        <authorList>
            <person name="Wershil B.K."/>
            <person name="Turck C.W."/>
            <person name="Sreedharan S.P."/>
            <person name="Yang J."/>
            <person name="An S."/>
            <person name="Galli S.J."/>
            <person name="Goetzl E.J."/>
        </authorList>
    </citation>
    <scope>PROTEIN SEQUENCE OF 119-129 AND 134-152</scope>
    <scope>AMIDATION AT ASN-152</scope>
    <source>
        <tissue>Mast cell</tissue>
    </source>
</reference>
<name>VIP_MOUSE</name>
<proteinExistence type="evidence at protein level"/>
<sequence>MEARSKPQFLAFLILFSVLFSQSLAWPLFGPPSVVRLDDRMPFEGAGDPDQVSLKADSDILQNPLAENGTPYYDVSRNARHADGVFTSDYSRLLGQISAKKYLESLIGKRISSSISEDPVPIKRHSDAVFTDNYTRLRKQMAVKKYLNSILNGKRSSEGDSADFLEELEK</sequence>
<accession>P32648</accession>
<accession>Q9D2Z7</accession>
<accession>Q9QUN1</accession>